<name>FLUC_CHESB</name>
<comment type="function">
    <text evidence="1">Fluoride-specific ion channel. Important for reducing fluoride concentration in the cell, thus reducing its toxicity.</text>
</comment>
<comment type="catalytic activity">
    <reaction evidence="1">
        <text>fluoride(in) = fluoride(out)</text>
        <dbReference type="Rhea" id="RHEA:76159"/>
        <dbReference type="ChEBI" id="CHEBI:17051"/>
    </reaction>
    <physiologicalReaction direction="left-to-right" evidence="1">
        <dbReference type="Rhea" id="RHEA:76160"/>
    </physiologicalReaction>
</comment>
<comment type="activity regulation">
    <text evidence="1">Na(+) is not transported, but it plays an essential structural role and its presence is essential for fluoride channel function.</text>
</comment>
<comment type="subcellular location">
    <subcellularLocation>
        <location evidence="1">Cell inner membrane</location>
        <topology evidence="1">Multi-pass membrane protein</topology>
    </subcellularLocation>
</comment>
<comment type="similarity">
    <text evidence="1">Belongs to the fluoride channel Fluc/FEX (TC 1.A.43) family.</text>
</comment>
<organism>
    <name type="scientific">Chelativorans sp. (strain BNC1)</name>
    <dbReference type="NCBI Taxonomy" id="266779"/>
    <lineage>
        <taxon>Bacteria</taxon>
        <taxon>Pseudomonadati</taxon>
        <taxon>Pseudomonadota</taxon>
        <taxon>Alphaproteobacteria</taxon>
        <taxon>Hyphomicrobiales</taxon>
        <taxon>Phyllobacteriaceae</taxon>
        <taxon>Chelativorans</taxon>
    </lineage>
</organism>
<protein>
    <recommendedName>
        <fullName evidence="1">Fluoride-specific ion channel FluC</fullName>
    </recommendedName>
</protein>
<feature type="chain" id="PRO_0000252897" description="Fluoride-specific ion channel FluC">
    <location>
        <begin position="1"/>
        <end position="125"/>
    </location>
</feature>
<feature type="transmembrane region" description="Helical" evidence="1">
    <location>
        <begin position="4"/>
        <end position="24"/>
    </location>
</feature>
<feature type="transmembrane region" description="Helical" evidence="1">
    <location>
        <begin position="32"/>
        <end position="52"/>
    </location>
</feature>
<feature type="transmembrane region" description="Helical" evidence="1">
    <location>
        <begin position="67"/>
        <end position="87"/>
    </location>
</feature>
<feature type="transmembrane region" description="Helical" evidence="1">
    <location>
        <begin position="100"/>
        <end position="120"/>
    </location>
</feature>
<feature type="binding site" evidence="1">
    <location>
        <position position="75"/>
    </location>
    <ligand>
        <name>Na(+)</name>
        <dbReference type="ChEBI" id="CHEBI:29101"/>
        <note>structural</note>
    </ligand>
</feature>
<feature type="binding site" evidence="1">
    <location>
        <position position="78"/>
    </location>
    <ligand>
        <name>Na(+)</name>
        <dbReference type="ChEBI" id="CHEBI:29101"/>
        <note>structural</note>
    </ligand>
</feature>
<accession>Q11HT1</accession>
<gene>
    <name evidence="1" type="primary">fluC</name>
    <name evidence="1" type="synonym">crcB</name>
    <name type="ordered locus">Meso_1649</name>
</gene>
<keyword id="KW-0997">Cell inner membrane</keyword>
<keyword id="KW-1003">Cell membrane</keyword>
<keyword id="KW-0407">Ion channel</keyword>
<keyword id="KW-0406">Ion transport</keyword>
<keyword id="KW-0472">Membrane</keyword>
<keyword id="KW-0479">Metal-binding</keyword>
<keyword id="KW-0915">Sodium</keyword>
<keyword id="KW-0812">Transmembrane</keyword>
<keyword id="KW-1133">Transmembrane helix</keyword>
<keyword id="KW-0813">Transport</keyword>
<dbReference type="EMBL" id="CP000390">
    <property type="protein sequence ID" value="ABG63044.1"/>
    <property type="molecule type" value="Genomic_DNA"/>
</dbReference>
<dbReference type="SMR" id="Q11HT1"/>
<dbReference type="STRING" id="266779.Meso_1649"/>
<dbReference type="KEGG" id="mes:Meso_1649"/>
<dbReference type="eggNOG" id="COG0239">
    <property type="taxonomic scope" value="Bacteria"/>
</dbReference>
<dbReference type="HOGENOM" id="CLU_114342_3_0_5"/>
<dbReference type="OrthoDB" id="9806299at2"/>
<dbReference type="GO" id="GO:0005886">
    <property type="term" value="C:plasma membrane"/>
    <property type="evidence" value="ECO:0007669"/>
    <property type="project" value="UniProtKB-SubCell"/>
</dbReference>
<dbReference type="GO" id="GO:0062054">
    <property type="term" value="F:fluoride channel activity"/>
    <property type="evidence" value="ECO:0007669"/>
    <property type="project" value="UniProtKB-UniRule"/>
</dbReference>
<dbReference type="GO" id="GO:0046872">
    <property type="term" value="F:metal ion binding"/>
    <property type="evidence" value="ECO:0007669"/>
    <property type="project" value="UniProtKB-KW"/>
</dbReference>
<dbReference type="GO" id="GO:0140114">
    <property type="term" value="P:cellular detoxification of fluoride"/>
    <property type="evidence" value="ECO:0007669"/>
    <property type="project" value="UniProtKB-UniRule"/>
</dbReference>
<dbReference type="HAMAP" id="MF_00454">
    <property type="entry name" value="FluC"/>
    <property type="match status" value="1"/>
</dbReference>
<dbReference type="InterPro" id="IPR003691">
    <property type="entry name" value="FluC"/>
</dbReference>
<dbReference type="NCBIfam" id="TIGR00494">
    <property type="entry name" value="crcB"/>
    <property type="match status" value="1"/>
</dbReference>
<dbReference type="NCBIfam" id="NF010791">
    <property type="entry name" value="PRK14195.1"/>
    <property type="match status" value="1"/>
</dbReference>
<dbReference type="PANTHER" id="PTHR28259">
    <property type="entry name" value="FLUORIDE EXPORT PROTEIN 1-RELATED"/>
    <property type="match status" value="1"/>
</dbReference>
<dbReference type="PANTHER" id="PTHR28259:SF1">
    <property type="entry name" value="FLUORIDE EXPORT PROTEIN 1-RELATED"/>
    <property type="match status" value="1"/>
</dbReference>
<dbReference type="Pfam" id="PF02537">
    <property type="entry name" value="CRCB"/>
    <property type="match status" value="1"/>
</dbReference>
<reference key="1">
    <citation type="submission" date="2006-06" db="EMBL/GenBank/DDBJ databases">
        <title>Complete sequence of chromosome of Mesorhizobium sp. BNC1.</title>
        <authorList>
            <consortium name="US DOE Joint Genome Institute"/>
            <person name="Copeland A."/>
            <person name="Lucas S."/>
            <person name="Lapidus A."/>
            <person name="Barry K."/>
            <person name="Detter J.C."/>
            <person name="Glavina del Rio T."/>
            <person name="Hammon N."/>
            <person name="Israni S."/>
            <person name="Dalin E."/>
            <person name="Tice H."/>
            <person name="Pitluck S."/>
            <person name="Chertkov O."/>
            <person name="Brettin T."/>
            <person name="Bruce D."/>
            <person name="Han C."/>
            <person name="Tapia R."/>
            <person name="Gilna P."/>
            <person name="Schmutz J."/>
            <person name="Larimer F."/>
            <person name="Land M."/>
            <person name="Hauser L."/>
            <person name="Kyrpides N."/>
            <person name="Mikhailova N."/>
            <person name="Richardson P."/>
        </authorList>
    </citation>
    <scope>NUCLEOTIDE SEQUENCE [LARGE SCALE GENOMIC DNA]</scope>
    <source>
        <strain>BNC1</strain>
    </source>
</reference>
<sequence length="125" mass="12927">MYHLMLVCLGGAIGAGMRHLTVTAAGRALGTAFPWGTLAVNVAGSFAMGLLVEALARKFSVSNEIRLLLAPGMLGGFTTFSAFSLDVAVLWERGAQSAALAYVLASVAGSILALFVGLWLARSIL</sequence>
<proteinExistence type="inferred from homology"/>
<evidence type="ECO:0000255" key="1">
    <source>
        <dbReference type="HAMAP-Rule" id="MF_00454"/>
    </source>
</evidence>